<gene>
    <name evidence="1" type="primary">aspS</name>
    <name type="ordered locus">EcE24377A_2096</name>
</gene>
<name>SYD_ECO24</name>
<evidence type="ECO:0000255" key="1">
    <source>
        <dbReference type="HAMAP-Rule" id="MF_00044"/>
    </source>
</evidence>
<reference key="1">
    <citation type="journal article" date="2008" name="J. Bacteriol.">
        <title>The pangenome structure of Escherichia coli: comparative genomic analysis of E. coli commensal and pathogenic isolates.</title>
        <authorList>
            <person name="Rasko D.A."/>
            <person name="Rosovitz M.J."/>
            <person name="Myers G.S.A."/>
            <person name="Mongodin E.F."/>
            <person name="Fricke W.F."/>
            <person name="Gajer P."/>
            <person name="Crabtree J."/>
            <person name="Sebaihia M."/>
            <person name="Thomson N.R."/>
            <person name="Chaudhuri R."/>
            <person name="Henderson I.R."/>
            <person name="Sperandio V."/>
            <person name="Ravel J."/>
        </authorList>
    </citation>
    <scope>NUCLEOTIDE SEQUENCE [LARGE SCALE GENOMIC DNA]</scope>
    <source>
        <strain>E24377A / ETEC</strain>
    </source>
</reference>
<accession>A7ZMZ0</accession>
<protein>
    <recommendedName>
        <fullName evidence="1">Aspartate--tRNA ligase</fullName>
        <ecNumber evidence="1">6.1.1.12</ecNumber>
    </recommendedName>
    <alternativeName>
        <fullName evidence="1">Aspartyl-tRNA synthetase</fullName>
        <shortName evidence="1">AspRS</shortName>
    </alternativeName>
</protein>
<keyword id="KW-0030">Aminoacyl-tRNA synthetase</keyword>
<keyword id="KW-0067">ATP-binding</keyword>
<keyword id="KW-0963">Cytoplasm</keyword>
<keyword id="KW-0436">Ligase</keyword>
<keyword id="KW-0547">Nucleotide-binding</keyword>
<keyword id="KW-0648">Protein biosynthesis</keyword>
<keyword id="KW-1185">Reference proteome</keyword>
<feature type="chain" id="PRO_1000057301" description="Aspartate--tRNA ligase">
    <location>
        <begin position="1"/>
        <end position="590"/>
    </location>
</feature>
<feature type="region of interest" description="Aspartate" evidence="1">
    <location>
        <begin position="195"/>
        <end position="198"/>
    </location>
</feature>
<feature type="binding site" evidence="1">
    <location>
        <position position="171"/>
    </location>
    <ligand>
        <name>L-aspartate</name>
        <dbReference type="ChEBI" id="CHEBI:29991"/>
    </ligand>
</feature>
<feature type="binding site" evidence="1">
    <location>
        <begin position="217"/>
        <end position="219"/>
    </location>
    <ligand>
        <name>ATP</name>
        <dbReference type="ChEBI" id="CHEBI:30616"/>
    </ligand>
</feature>
<feature type="binding site" evidence="1">
    <location>
        <position position="217"/>
    </location>
    <ligand>
        <name>L-aspartate</name>
        <dbReference type="ChEBI" id="CHEBI:29991"/>
    </ligand>
</feature>
<feature type="binding site" evidence="1">
    <location>
        <position position="226"/>
    </location>
    <ligand>
        <name>ATP</name>
        <dbReference type="ChEBI" id="CHEBI:30616"/>
    </ligand>
</feature>
<feature type="binding site" evidence="1">
    <location>
        <position position="448"/>
    </location>
    <ligand>
        <name>L-aspartate</name>
        <dbReference type="ChEBI" id="CHEBI:29991"/>
    </ligand>
</feature>
<feature type="binding site" evidence="1">
    <location>
        <position position="482"/>
    </location>
    <ligand>
        <name>ATP</name>
        <dbReference type="ChEBI" id="CHEBI:30616"/>
    </ligand>
</feature>
<feature type="binding site" evidence="1">
    <location>
        <position position="489"/>
    </location>
    <ligand>
        <name>L-aspartate</name>
        <dbReference type="ChEBI" id="CHEBI:29991"/>
    </ligand>
</feature>
<feature type="binding site" evidence="1">
    <location>
        <begin position="534"/>
        <end position="537"/>
    </location>
    <ligand>
        <name>ATP</name>
        <dbReference type="ChEBI" id="CHEBI:30616"/>
    </ligand>
</feature>
<organism>
    <name type="scientific">Escherichia coli O139:H28 (strain E24377A / ETEC)</name>
    <dbReference type="NCBI Taxonomy" id="331111"/>
    <lineage>
        <taxon>Bacteria</taxon>
        <taxon>Pseudomonadati</taxon>
        <taxon>Pseudomonadota</taxon>
        <taxon>Gammaproteobacteria</taxon>
        <taxon>Enterobacterales</taxon>
        <taxon>Enterobacteriaceae</taxon>
        <taxon>Escherichia</taxon>
    </lineage>
</organism>
<comment type="function">
    <text evidence="1">Catalyzes the attachment of L-aspartate to tRNA(Asp) in a two-step reaction: L-aspartate is first activated by ATP to form Asp-AMP and then transferred to the acceptor end of tRNA(Asp).</text>
</comment>
<comment type="catalytic activity">
    <reaction evidence="1">
        <text>tRNA(Asp) + L-aspartate + ATP = L-aspartyl-tRNA(Asp) + AMP + diphosphate</text>
        <dbReference type="Rhea" id="RHEA:19649"/>
        <dbReference type="Rhea" id="RHEA-COMP:9660"/>
        <dbReference type="Rhea" id="RHEA-COMP:9678"/>
        <dbReference type="ChEBI" id="CHEBI:29991"/>
        <dbReference type="ChEBI" id="CHEBI:30616"/>
        <dbReference type="ChEBI" id="CHEBI:33019"/>
        <dbReference type="ChEBI" id="CHEBI:78442"/>
        <dbReference type="ChEBI" id="CHEBI:78516"/>
        <dbReference type="ChEBI" id="CHEBI:456215"/>
        <dbReference type="EC" id="6.1.1.12"/>
    </reaction>
</comment>
<comment type="subunit">
    <text evidence="1">Homodimer.</text>
</comment>
<comment type="subcellular location">
    <subcellularLocation>
        <location evidence="1">Cytoplasm</location>
    </subcellularLocation>
</comment>
<comment type="similarity">
    <text evidence="1">Belongs to the class-II aminoacyl-tRNA synthetase family. Type 1 subfamily.</text>
</comment>
<proteinExistence type="inferred from homology"/>
<sequence>MRTEYCGQLRLSHVGQQVTLCGWVNRRRDLGSLIFIDMRDREGIVQVFFDPDRADALKLASELRNEFCIQVTGTVRARDEKNINRDMATGEIEVLASSLTIINRADVLPLDSNHVNTEEARLKYRYLDLRRPEMAQRLKTRAKITSLVRRFMDDHGFLDIETPMLTKATPEGARDYLVPSRVHKGKFYALPQSPQLFKQLLMMSGFDRYYQIVKCFRDEDLRADRQPEFTQIDVETSFMTAPQVREVMEALVRHLWLEVKGVDLGDFPVMTFAEAERRYGSDKPDLRNPMELTDVADLLKSVEFAVFAGPANDPKGRVAALRVPGGASLTRKQIDEYGNFVKIYGAKGLAYIKVNERAKGLEGINSPVAKFLNAEIIEAILDRTAAQDGDMIFFGADNKKIVADAMGALRLKVGKDLGLTDESKWAPLWVIDFPMFEDDGEGGLTAMHHPFTSPKDMTAAELKAAPENAVANAYDMVINGYEVGGGSVRIHNGDMQQTVFGILGINEEEQREKFGFLLDALKYGTPPHAGLAFGLDRLTMLLTGTDNIRDVIAFPKTTAAACLMTEAPSFANPTALAELSIQVVKKAENN</sequence>
<dbReference type="EC" id="6.1.1.12" evidence="1"/>
<dbReference type="EMBL" id="CP000800">
    <property type="protein sequence ID" value="ABV17573.1"/>
    <property type="molecule type" value="Genomic_DNA"/>
</dbReference>
<dbReference type="RefSeq" id="WP_001258662.1">
    <property type="nucleotide sequence ID" value="NC_009801.1"/>
</dbReference>
<dbReference type="SMR" id="A7ZMZ0"/>
<dbReference type="GeneID" id="75202728"/>
<dbReference type="KEGG" id="ecw:EcE24377A_2096"/>
<dbReference type="HOGENOM" id="CLU_014330_3_2_6"/>
<dbReference type="Proteomes" id="UP000001122">
    <property type="component" value="Chromosome"/>
</dbReference>
<dbReference type="GO" id="GO:0005737">
    <property type="term" value="C:cytoplasm"/>
    <property type="evidence" value="ECO:0007669"/>
    <property type="project" value="UniProtKB-SubCell"/>
</dbReference>
<dbReference type="GO" id="GO:0004815">
    <property type="term" value="F:aspartate-tRNA ligase activity"/>
    <property type="evidence" value="ECO:0007669"/>
    <property type="project" value="UniProtKB-UniRule"/>
</dbReference>
<dbReference type="GO" id="GO:0005524">
    <property type="term" value="F:ATP binding"/>
    <property type="evidence" value="ECO:0007669"/>
    <property type="project" value="UniProtKB-UniRule"/>
</dbReference>
<dbReference type="GO" id="GO:0003676">
    <property type="term" value="F:nucleic acid binding"/>
    <property type="evidence" value="ECO:0007669"/>
    <property type="project" value="InterPro"/>
</dbReference>
<dbReference type="GO" id="GO:0006422">
    <property type="term" value="P:aspartyl-tRNA aminoacylation"/>
    <property type="evidence" value="ECO:0007669"/>
    <property type="project" value="UniProtKB-UniRule"/>
</dbReference>
<dbReference type="CDD" id="cd00777">
    <property type="entry name" value="AspRS_core"/>
    <property type="match status" value="1"/>
</dbReference>
<dbReference type="CDD" id="cd04317">
    <property type="entry name" value="EcAspRS_like_N"/>
    <property type="match status" value="1"/>
</dbReference>
<dbReference type="FunFam" id="2.40.50.140:FF:000080">
    <property type="entry name" value="Aspartate--tRNA ligase"/>
    <property type="match status" value="1"/>
</dbReference>
<dbReference type="FunFam" id="3.30.1360.30:FF:000001">
    <property type="entry name" value="Aspartate--tRNA ligase"/>
    <property type="match status" value="1"/>
</dbReference>
<dbReference type="Gene3D" id="3.30.930.10">
    <property type="entry name" value="Bira Bifunctional Protein, Domain 2"/>
    <property type="match status" value="1"/>
</dbReference>
<dbReference type="Gene3D" id="3.30.1360.30">
    <property type="entry name" value="GAD-like domain"/>
    <property type="match status" value="1"/>
</dbReference>
<dbReference type="Gene3D" id="2.40.50.140">
    <property type="entry name" value="Nucleic acid-binding proteins"/>
    <property type="match status" value="1"/>
</dbReference>
<dbReference type="HAMAP" id="MF_00044">
    <property type="entry name" value="Asp_tRNA_synth_type1"/>
    <property type="match status" value="1"/>
</dbReference>
<dbReference type="InterPro" id="IPR004364">
    <property type="entry name" value="Aa-tRNA-synt_II"/>
</dbReference>
<dbReference type="InterPro" id="IPR006195">
    <property type="entry name" value="aa-tRNA-synth_II"/>
</dbReference>
<dbReference type="InterPro" id="IPR045864">
    <property type="entry name" value="aa-tRNA-synth_II/BPL/LPL"/>
</dbReference>
<dbReference type="InterPro" id="IPR004524">
    <property type="entry name" value="Asp-tRNA-ligase_1"/>
</dbReference>
<dbReference type="InterPro" id="IPR047089">
    <property type="entry name" value="Asp-tRNA-ligase_1_N"/>
</dbReference>
<dbReference type="InterPro" id="IPR002312">
    <property type="entry name" value="Asp/Asn-tRNA-synth_IIb"/>
</dbReference>
<dbReference type="InterPro" id="IPR047090">
    <property type="entry name" value="AspRS_core"/>
</dbReference>
<dbReference type="InterPro" id="IPR004115">
    <property type="entry name" value="GAD-like_sf"/>
</dbReference>
<dbReference type="InterPro" id="IPR029351">
    <property type="entry name" value="GAD_dom"/>
</dbReference>
<dbReference type="InterPro" id="IPR012340">
    <property type="entry name" value="NA-bd_OB-fold"/>
</dbReference>
<dbReference type="InterPro" id="IPR004365">
    <property type="entry name" value="NA-bd_OB_tRNA"/>
</dbReference>
<dbReference type="NCBIfam" id="TIGR00459">
    <property type="entry name" value="aspS_bact"/>
    <property type="match status" value="1"/>
</dbReference>
<dbReference type="NCBIfam" id="NF001750">
    <property type="entry name" value="PRK00476.1"/>
    <property type="match status" value="1"/>
</dbReference>
<dbReference type="PANTHER" id="PTHR22594:SF5">
    <property type="entry name" value="ASPARTATE--TRNA LIGASE, MITOCHONDRIAL"/>
    <property type="match status" value="1"/>
</dbReference>
<dbReference type="PANTHER" id="PTHR22594">
    <property type="entry name" value="ASPARTYL/LYSYL-TRNA SYNTHETASE"/>
    <property type="match status" value="1"/>
</dbReference>
<dbReference type="Pfam" id="PF02938">
    <property type="entry name" value="GAD"/>
    <property type="match status" value="1"/>
</dbReference>
<dbReference type="Pfam" id="PF00152">
    <property type="entry name" value="tRNA-synt_2"/>
    <property type="match status" value="1"/>
</dbReference>
<dbReference type="Pfam" id="PF01336">
    <property type="entry name" value="tRNA_anti-codon"/>
    <property type="match status" value="1"/>
</dbReference>
<dbReference type="PRINTS" id="PR01042">
    <property type="entry name" value="TRNASYNTHASP"/>
</dbReference>
<dbReference type="SUPFAM" id="SSF55681">
    <property type="entry name" value="Class II aaRS and biotin synthetases"/>
    <property type="match status" value="1"/>
</dbReference>
<dbReference type="SUPFAM" id="SSF55261">
    <property type="entry name" value="GAD domain-like"/>
    <property type="match status" value="1"/>
</dbReference>
<dbReference type="SUPFAM" id="SSF50249">
    <property type="entry name" value="Nucleic acid-binding proteins"/>
    <property type="match status" value="1"/>
</dbReference>
<dbReference type="PROSITE" id="PS50862">
    <property type="entry name" value="AA_TRNA_LIGASE_II"/>
    <property type="match status" value="1"/>
</dbReference>